<name>HIS22_BRADU</name>
<reference key="1">
    <citation type="submission" date="2004-03" db="EMBL/GenBank/DDBJ databases">
        <title>A TnKPK2 insertion in the B. japonicum aspA gene causes the formation of inflated symbiosomes within infected soybean nodule cells.</title>
        <authorList>
            <person name="Mueller P."/>
        </authorList>
    </citation>
    <scope>NUCLEOTIDE SEQUENCE [GENOMIC DNA]</scope>
    <source>
        <strain>USDA 110spc4</strain>
    </source>
</reference>
<reference key="2">
    <citation type="journal article" date="2002" name="DNA Res.">
        <title>Complete genomic sequence of nitrogen-fixing symbiotic bacterium Bradyrhizobium japonicum USDA110.</title>
        <authorList>
            <person name="Kaneko T."/>
            <person name="Nakamura Y."/>
            <person name="Sato S."/>
            <person name="Minamisawa K."/>
            <person name="Uchiumi T."/>
            <person name="Sasamoto S."/>
            <person name="Watanabe A."/>
            <person name="Idesawa K."/>
            <person name="Iriguchi M."/>
            <person name="Kawashima K."/>
            <person name="Kohara M."/>
            <person name="Matsumoto M."/>
            <person name="Shimpo S."/>
            <person name="Tsuruoka H."/>
            <person name="Wada T."/>
            <person name="Yamada M."/>
            <person name="Tabata S."/>
        </authorList>
    </citation>
    <scope>NUCLEOTIDE SEQUENCE [LARGE SCALE GENOMIC DNA]</scope>
    <source>
        <strain>JCM 10833 / BCRC 13528 / IAM 13628 / NBRC 14792 / USDA 110</strain>
    </source>
</reference>
<dbReference type="EC" id="3.6.1.31"/>
<dbReference type="EMBL" id="AY046315">
    <property type="protein sequence ID" value="AAL02318.2"/>
    <property type="molecule type" value="Genomic_DNA"/>
</dbReference>
<dbReference type="EMBL" id="BA000040">
    <property type="protein sequence ID" value="BAC46588.1"/>
    <property type="molecule type" value="Genomic_DNA"/>
</dbReference>
<dbReference type="RefSeq" id="NP_767963.1">
    <property type="nucleotide sequence ID" value="NC_004463.1"/>
</dbReference>
<dbReference type="RefSeq" id="WP_011084141.1">
    <property type="nucleotide sequence ID" value="NC_004463.1"/>
</dbReference>
<dbReference type="SMR" id="Q938W0"/>
<dbReference type="STRING" id="224911.AAV28_03510"/>
<dbReference type="EnsemblBacteria" id="BAC46588">
    <property type="protein sequence ID" value="BAC46588"/>
    <property type="gene ID" value="BAC46588"/>
</dbReference>
<dbReference type="GeneID" id="46488592"/>
<dbReference type="KEGG" id="bja:blr1323"/>
<dbReference type="PATRIC" id="fig|224911.44.peg.739"/>
<dbReference type="eggNOG" id="COG0140">
    <property type="taxonomic scope" value="Bacteria"/>
</dbReference>
<dbReference type="HOGENOM" id="CLU_123337_1_3_5"/>
<dbReference type="InParanoid" id="Q938W0"/>
<dbReference type="OrthoDB" id="9814738at2"/>
<dbReference type="PhylomeDB" id="Q938W0"/>
<dbReference type="UniPathway" id="UPA00031">
    <property type="reaction ID" value="UER00007"/>
</dbReference>
<dbReference type="Proteomes" id="UP000002526">
    <property type="component" value="Chromosome"/>
</dbReference>
<dbReference type="GO" id="GO:0005737">
    <property type="term" value="C:cytoplasm"/>
    <property type="evidence" value="ECO:0007669"/>
    <property type="project" value="UniProtKB-SubCell"/>
</dbReference>
<dbReference type="GO" id="GO:0005524">
    <property type="term" value="F:ATP binding"/>
    <property type="evidence" value="ECO:0007669"/>
    <property type="project" value="UniProtKB-KW"/>
</dbReference>
<dbReference type="GO" id="GO:0004636">
    <property type="term" value="F:phosphoribosyl-ATP diphosphatase activity"/>
    <property type="evidence" value="ECO:0007669"/>
    <property type="project" value="UniProtKB-UniRule"/>
</dbReference>
<dbReference type="GO" id="GO:0000105">
    <property type="term" value="P:L-histidine biosynthetic process"/>
    <property type="evidence" value="ECO:0007669"/>
    <property type="project" value="UniProtKB-UniRule"/>
</dbReference>
<dbReference type="CDD" id="cd11534">
    <property type="entry name" value="NTP-PPase_HisIE_like"/>
    <property type="match status" value="1"/>
</dbReference>
<dbReference type="Gene3D" id="1.10.287.1080">
    <property type="entry name" value="MazG-like"/>
    <property type="match status" value="1"/>
</dbReference>
<dbReference type="HAMAP" id="MF_01020">
    <property type="entry name" value="HisE"/>
    <property type="match status" value="1"/>
</dbReference>
<dbReference type="InterPro" id="IPR008179">
    <property type="entry name" value="HisE"/>
</dbReference>
<dbReference type="InterPro" id="IPR021130">
    <property type="entry name" value="PRib-ATP_PPHydrolase-like"/>
</dbReference>
<dbReference type="NCBIfam" id="TIGR03188">
    <property type="entry name" value="histidine_hisI"/>
    <property type="match status" value="1"/>
</dbReference>
<dbReference type="PANTHER" id="PTHR42945">
    <property type="entry name" value="HISTIDINE BIOSYNTHESIS BIFUNCTIONAL PROTEIN"/>
    <property type="match status" value="1"/>
</dbReference>
<dbReference type="PANTHER" id="PTHR42945:SF1">
    <property type="entry name" value="HISTIDINE BIOSYNTHESIS BIFUNCTIONAL PROTEIN HIS7"/>
    <property type="match status" value="1"/>
</dbReference>
<dbReference type="Pfam" id="PF01503">
    <property type="entry name" value="PRA-PH"/>
    <property type="match status" value="1"/>
</dbReference>
<dbReference type="SUPFAM" id="SSF101386">
    <property type="entry name" value="all-alpha NTP pyrophosphatases"/>
    <property type="match status" value="1"/>
</dbReference>
<keyword id="KW-0028">Amino-acid biosynthesis</keyword>
<keyword id="KW-0067">ATP-binding</keyword>
<keyword id="KW-0963">Cytoplasm</keyword>
<keyword id="KW-0368">Histidine biosynthesis</keyword>
<keyword id="KW-0378">Hydrolase</keyword>
<keyword id="KW-0547">Nucleotide-binding</keyword>
<keyword id="KW-1185">Reference proteome</keyword>
<comment type="catalytic activity">
    <reaction>
        <text>1-(5-phospho-beta-D-ribosyl)-ATP + H2O = 1-(5-phospho-beta-D-ribosyl)-5'-AMP + diphosphate + H(+)</text>
        <dbReference type="Rhea" id="RHEA:22828"/>
        <dbReference type="ChEBI" id="CHEBI:15377"/>
        <dbReference type="ChEBI" id="CHEBI:15378"/>
        <dbReference type="ChEBI" id="CHEBI:33019"/>
        <dbReference type="ChEBI" id="CHEBI:59457"/>
        <dbReference type="ChEBI" id="CHEBI:73183"/>
        <dbReference type="EC" id="3.6.1.31"/>
    </reaction>
</comment>
<comment type="pathway">
    <text>Amino-acid biosynthesis; L-histidine biosynthesis; L-histidine from 5-phospho-alpha-D-ribose 1-diphosphate: step 2/9.</text>
</comment>
<comment type="subcellular location">
    <subcellularLocation>
        <location evidence="1">Cytoplasm</location>
    </subcellularLocation>
</comment>
<comment type="similarity">
    <text evidence="2">Belongs to the PRA-PH family.</text>
</comment>
<organism>
    <name type="scientific">Bradyrhizobium diazoefficiens (strain JCM 10833 / BCRC 13528 / IAM 13628 / NBRC 14792 / USDA 110)</name>
    <dbReference type="NCBI Taxonomy" id="224911"/>
    <lineage>
        <taxon>Bacteria</taxon>
        <taxon>Pseudomonadati</taxon>
        <taxon>Pseudomonadota</taxon>
        <taxon>Alphaproteobacteria</taxon>
        <taxon>Hyphomicrobiales</taxon>
        <taxon>Nitrobacteraceae</taxon>
        <taxon>Bradyrhizobium</taxon>
    </lineage>
</organism>
<accession>Q938W0</accession>
<gene>
    <name type="primary">hisE2</name>
    <name type="synonym">his2</name>
    <name type="ordered locus">blr1323</name>
</gene>
<proteinExistence type="inferred from homology"/>
<protein>
    <recommendedName>
        <fullName>Phosphoribosyl-ATP pyrophosphatase 2</fullName>
        <shortName>PRA-PH 2</shortName>
        <ecNumber>3.6.1.31</ecNumber>
    </recommendedName>
</protein>
<feature type="chain" id="PRO_0000136351" description="Phosphoribosyl-ATP pyrophosphatase 2">
    <location>
        <begin position="1"/>
        <end position="134"/>
    </location>
</feature>
<sequence>MSDSLERLYLAVLAARDLDPATSRTARLFQRGPSKMAKKLAEEAIEVVIDAVNGDTDAVVRESADLLYNLTVLWASAGVRPEDVWREMTRREDMLGIAEKLPKSAMKLPKVASPRVAARRPIVALEGRTARKRH</sequence>
<evidence type="ECO:0000250" key="1"/>
<evidence type="ECO:0000305" key="2"/>